<organism>
    <name type="scientific">Bartonella tribocorum (strain CIP 105476 / IBS 506)</name>
    <dbReference type="NCBI Taxonomy" id="382640"/>
    <lineage>
        <taxon>Bacteria</taxon>
        <taxon>Pseudomonadati</taxon>
        <taxon>Pseudomonadota</taxon>
        <taxon>Alphaproteobacteria</taxon>
        <taxon>Hyphomicrobiales</taxon>
        <taxon>Bartonellaceae</taxon>
        <taxon>Bartonella</taxon>
    </lineage>
</organism>
<keyword id="KW-0413">Isomerase</keyword>
<keyword id="KW-0460">Magnesium</keyword>
<keyword id="KW-0479">Metal-binding</keyword>
<keyword id="KW-0597">Phosphoprotein</keyword>
<protein>
    <recommendedName>
        <fullName evidence="1">Phosphoglucosamine mutase</fullName>
        <ecNumber evidence="1">5.4.2.10</ecNumber>
    </recommendedName>
</protein>
<sequence length="453" mass="49414">MVQKYFGTDGIRGKANSFPMTPDFAMKVGMAVGVLFRSQHQSRRVVIGKDTRLSGYMLENALVSGLTAAGMDVFLLGPVPTPAVAMLCRSLRADLGVMISASHNPFYDNGIKLFGPDGFKLSDDMEAKIEQLIDTDLSKSLASSAEIGSAKRVEGDIYRYIEYAKRTLPRDVRLDAVRIVVDCANGAAYKAAPRALWELGAEVFAIHDEPNGTNINQKCGSTDLSSLKRKVHEVRADVGIALDGDGDRVLIVDEKAQTVDGDQLIAVIAENWHKMGRLRCNGVVTTIMSNLGLERFLNGKGLDLIRTKVGDRYVVDAMRQKGYNVGGEASGHIVLSDFGTTGDGLVAALQILACMKESQNPMSQLCQRFEPVPQILKNVTIKNKNVLKKNPVKTAIDQAEKRLGKEARLVIRASGTEPVIRLMAEGDAREVLDTVVTELMDVITHHDTRVDCI</sequence>
<dbReference type="EC" id="5.4.2.10" evidence="1"/>
<dbReference type="EMBL" id="AM260525">
    <property type="protein sequence ID" value="CAK02365.1"/>
    <property type="molecule type" value="Genomic_DNA"/>
</dbReference>
<dbReference type="RefSeq" id="WP_012232423.1">
    <property type="nucleotide sequence ID" value="NC_010161.1"/>
</dbReference>
<dbReference type="SMR" id="A9IYI0"/>
<dbReference type="KEGG" id="btr:BT_2355"/>
<dbReference type="eggNOG" id="COG1109">
    <property type="taxonomic scope" value="Bacteria"/>
</dbReference>
<dbReference type="HOGENOM" id="CLU_016950_7_0_5"/>
<dbReference type="Proteomes" id="UP000001592">
    <property type="component" value="Chromosome"/>
</dbReference>
<dbReference type="GO" id="GO:0005829">
    <property type="term" value="C:cytosol"/>
    <property type="evidence" value="ECO:0007669"/>
    <property type="project" value="TreeGrafter"/>
</dbReference>
<dbReference type="GO" id="GO:0000287">
    <property type="term" value="F:magnesium ion binding"/>
    <property type="evidence" value="ECO:0007669"/>
    <property type="project" value="UniProtKB-UniRule"/>
</dbReference>
<dbReference type="GO" id="GO:0008966">
    <property type="term" value="F:phosphoglucosamine mutase activity"/>
    <property type="evidence" value="ECO:0007669"/>
    <property type="project" value="UniProtKB-UniRule"/>
</dbReference>
<dbReference type="GO" id="GO:0004615">
    <property type="term" value="F:phosphomannomutase activity"/>
    <property type="evidence" value="ECO:0007669"/>
    <property type="project" value="TreeGrafter"/>
</dbReference>
<dbReference type="GO" id="GO:0005975">
    <property type="term" value="P:carbohydrate metabolic process"/>
    <property type="evidence" value="ECO:0007669"/>
    <property type="project" value="InterPro"/>
</dbReference>
<dbReference type="GO" id="GO:0009252">
    <property type="term" value="P:peptidoglycan biosynthetic process"/>
    <property type="evidence" value="ECO:0007669"/>
    <property type="project" value="TreeGrafter"/>
</dbReference>
<dbReference type="GO" id="GO:0006048">
    <property type="term" value="P:UDP-N-acetylglucosamine biosynthetic process"/>
    <property type="evidence" value="ECO:0007669"/>
    <property type="project" value="TreeGrafter"/>
</dbReference>
<dbReference type="CDD" id="cd05802">
    <property type="entry name" value="GlmM"/>
    <property type="match status" value="1"/>
</dbReference>
<dbReference type="FunFam" id="3.40.120.10:FF:000001">
    <property type="entry name" value="Phosphoglucosamine mutase"/>
    <property type="match status" value="1"/>
</dbReference>
<dbReference type="FunFam" id="3.40.120.10:FF:000002">
    <property type="entry name" value="Phosphoglucosamine mutase"/>
    <property type="match status" value="1"/>
</dbReference>
<dbReference type="Gene3D" id="3.40.120.10">
    <property type="entry name" value="Alpha-D-Glucose-1,6-Bisphosphate, subunit A, domain 3"/>
    <property type="match status" value="3"/>
</dbReference>
<dbReference type="Gene3D" id="3.30.310.50">
    <property type="entry name" value="Alpha-D-phosphohexomutase, C-terminal domain"/>
    <property type="match status" value="1"/>
</dbReference>
<dbReference type="HAMAP" id="MF_01554_B">
    <property type="entry name" value="GlmM_B"/>
    <property type="match status" value="1"/>
</dbReference>
<dbReference type="InterPro" id="IPR005844">
    <property type="entry name" value="A-D-PHexomutase_a/b/a-I"/>
</dbReference>
<dbReference type="InterPro" id="IPR016055">
    <property type="entry name" value="A-D-PHexomutase_a/b/a-I/II/III"/>
</dbReference>
<dbReference type="InterPro" id="IPR005845">
    <property type="entry name" value="A-D-PHexomutase_a/b/a-II"/>
</dbReference>
<dbReference type="InterPro" id="IPR005846">
    <property type="entry name" value="A-D-PHexomutase_a/b/a-III"/>
</dbReference>
<dbReference type="InterPro" id="IPR005843">
    <property type="entry name" value="A-D-PHexomutase_C"/>
</dbReference>
<dbReference type="InterPro" id="IPR036900">
    <property type="entry name" value="A-D-PHexomutase_C_sf"/>
</dbReference>
<dbReference type="InterPro" id="IPR016066">
    <property type="entry name" value="A-D-PHexomutase_CS"/>
</dbReference>
<dbReference type="InterPro" id="IPR005841">
    <property type="entry name" value="Alpha-D-phosphohexomutase_SF"/>
</dbReference>
<dbReference type="InterPro" id="IPR006352">
    <property type="entry name" value="GlmM_bact"/>
</dbReference>
<dbReference type="InterPro" id="IPR050060">
    <property type="entry name" value="Phosphoglucosamine_mutase"/>
</dbReference>
<dbReference type="NCBIfam" id="TIGR01455">
    <property type="entry name" value="glmM"/>
    <property type="match status" value="1"/>
</dbReference>
<dbReference type="NCBIfam" id="NF008139">
    <property type="entry name" value="PRK10887.1"/>
    <property type="match status" value="1"/>
</dbReference>
<dbReference type="PANTHER" id="PTHR42946:SF1">
    <property type="entry name" value="PHOSPHOGLUCOMUTASE (ALPHA-D-GLUCOSE-1,6-BISPHOSPHATE-DEPENDENT)"/>
    <property type="match status" value="1"/>
</dbReference>
<dbReference type="PANTHER" id="PTHR42946">
    <property type="entry name" value="PHOSPHOHEXOSE MUTASE"/>
    <property type="match status" value="1"/>
</dbReference>
<dbReference type="Pfam" id="PF02878">
    <property type="entry name" value="PGM_PMM_I"/>
    <property type="match status" value="1"/>
</dbReference>
<dbReference type="Pfam" id="PF02879">
    <property type="entry name" value="PGM_PMM_II"/>
    <property type="match status" value="1"/>
</dbReference>
<dbReference type="Pfam" id="PF02880">
    <property type="entry name" value="PGM_PMM_III"/>
    <property type="match status" value="1"/>
</dbReference>
<dbReference type="Pfam" id="PF00408">
    <property type="entry name" value="PGM_PMM_IV"/>
    <property type="match status" value="1"/>
</dbReference>
<dbReference type="PRINTS" id="PR00509">
    <property type="entry name" value="PGMPMM"/>
</dbReference>
<dbReference type="SUPFAM" id="SSF55957">
    <property type="entry name" value="Phosphoglucomutase, C-terminal domain"/>
    <property type="match status" value="1"/>
</dbReference>
<dbReference type="SUPFAM" id="SSF53738">
    <property type="entry name" value="Phosphoglucomutase, first 3 domains"/>
    <property type="match status" value="3"/>
</dbReference>
<dbReference type="PROSITE" id="PS00710">
    <property type="entry name" value="PGM_PMM"/>
    <property type="match status" value="1"/>
</dbReference>
<gene>
    <name evidence="1" type="primary">glmM</name>
    <name type="ordered locus">BT_2355</name>
</gene>
<name>GLMM_BART1</name>
<evidence type="ECO:0000255" key="1">
    <source>
        <dbReference type="HAMAP-Rule" id="MF_01554"/>
    </source>
</evidence>
<comment type="function">
    <text evidence="1">Catalyzes the conversion of glucosamine-6-phosphate to glucosamine-1-phosphate.</text>
</comment>
<comment type="catalytic activity">
    <reaction evidence="1">
        <text>alpha-D-glucosamine 1-phosphate = D-glucosamine 6-phosphate</text>
        <dbReference type="Rhea" id="RHEA:23424"/>
        <dbReference type="ChEBI" id="CHEBI:58516"/>
        <dbReference type="ChEBI" id="CHEBI:58725"/>
        <dbReference type="EC" id="5.4.2.10"/>
    </reaction>
</comment>
<comment type="cofactor">
    <cofactor evidence="1">
        <name>Mg(2+)</name>
        <dbReference type="ChEBI" id="CHEBI:18420"/>
    </cofactor>
    <text evidence="1">Binds 1 Mg(2+) ion per subunit.</text>
</comment>
<comment type="PTM">
    <text evidence="1">Activated by phosphorylation.</text>
</comment>
<comment type="similarity">
    <text evidence="1">Belongs to the phosphohexose mutase family.</text>
</comment>
<reference key="1">
    <citation type="journal article" date="2007" name="Nat. Genet.">
        <title>Genomic analysis of Bartonella identifies type IV secretion systems as host adaptability factors.</title>
        <authorList>
            <person name="Saenz H.L."/>
            <person name="Engel P."/>
            <person name="Stoeckli M.C."/>
            <person name="Lanz C."/>
            <person name="Raddatz G."/>
            <person name="Vayssier-Taussat M."/>
            <person name="Birtles R."/>
            <person name="Schuster S.C."/>
            <person name="Dehio C."/>
        </authorList>
    </citation>
    <scope>NUCLEOTIDE SEQUENCE [LARGE SCALE GENOMIC DNA]</scope>
    <source>
        <strain>CIP 105476 / IBS 506</strain>
    </source>
</reference>
<feature type="chain" id="PRO_1000087758" description="Phosphoglucosamine mutase">
    <location>
        <begin position="1"/>
        <end position="453"/>
    </location>
</feature>
<feature type="active site" description="Phosphoserine intermediate" evidence="1">
    <location>
        <position position="102"/>
    </location>
</feature>
<feature type="binding site" description="via phosphate group" evidence="1">
    <location>
        <position position="102"/>
    </location>
    <ligand>
        <name>Mg(2+)</name>
        <dbReference type="ChEBI" id="CHEBI:18420"/>
    </ligand>
</feature>
<feature type="binding site" evidence="1">
    <location>
        <position position="243"/>
    </location>
    <ligand>
        <name>Mg(2+)</name>
        <dbReference type="ChEBI" id="CHEBI:18420"/>
    </ligand>
</feature>
<feature type="binding site" evidence="1">
    <location>
        <position position="245"/>
    </location>
    <ligand>
        <name>Mg(2+)</name>
        <dbReference type="ChEBI" id="CHEBI:18420"/>
    </ligand>
</feature>
<feature type="binding site" evidence="1">
    <location>
        <position position="247"/>
    </location>
    <ligand>
        <name>Mg(2+)</name>
        <dbReference type="ChEBI" id="CHEBI:18420"/>
    </ligand>
</feature>
<feature type="modified residue" description="Phosphoserine" evidence="1">
    <location>
        <position position="102"/>
    </location>
</feature>
<accession>A9IYI0</accession>
<proteinExistence type="inferred from homology"/>